<reference key="1">
    <citation type="journal article" date="2005" name="PLoS Biol.">
        <title>Major structural differences and novel potential virulence mechanisms from the genomes of multiple Campylobacter species.</title>
        <authorList>
            <person name="Fouts D.E."/>
            <person name="Mongodin E.F."/>
            <person name="Mandrell R.E."/>
            <person name="Miller W.G."/>
            <person name="Rasko D.A."/>
            <person name="Ravel J."/>
            <person name="Brinkac L.M."/>
            <person name="DeBoy R.T."/>
            <person name="Parker C.T."/>
            <person name="Daugherty S.C."/>
            <person name="Dodson R.J."/>
            <person name="Durkin A.S."/>
            <person name="Madupu R."/>
            <person name="Sullivan S.A."/>
            <person name="Shetty J.U."/>
            <person name="Ayodeji M.A."/>
            <person name="Shvartsbeyn A."/>
            <person name="Schatz M.C."/>
            <person name="Badger J.H."/>
            <person name="Fraser C.M."/>
            <person name="Nelson K.E."/>
        </authorList>
    </citation>
    <scope>NUCLEOTIDE SEQUENCE [LARGE SCALE GENOMIC DNA]</scope>
    <source>
        <strain>RM1221</strain>
    </source>
</reference>
<organism>
    <name type="scientific">Campylobacter jejuni (strain RM1221)</name>
    <dbReference type="NCBI Taxonomy" id="195099"/>
    <lineage>
        <taxon>Bacteria</taxon>
        <taxon>Pseudomonadati</taxon>
        <taxon>Campylobacterota</taxon>
        <taxon>Epsilonproteobacteria</taxon>
        <taxon>Campylobacterales</taxon>
        <taxon>Campylobacteraceae</taxon>
        <taxon>Campylobacter</taxon>
    </lineage>
</organism>
<gene>
    <name evidence="1" type="primary">nadE</name>
    <name type="ordered locus">CJE0901</name>
</gene>
<comment type="function">
    <text evidence="1">Catalyzes the ATP-dependent amidation of deamido-NAD to form NAD. Uses ammonia as a nitrogen source.</text>
</comment>
<comment type="catalytic activity">
    <reaction evidence="1">
        <text>deamido-NAD(+) + NH4(+) + ATP = AMP + diphosphate + NAD(+) + H(+)</text>
        <dbReference type="Rhea" id="RHEA:21188"/>
        <dbReference type="ChEBI" id="CHEBI:15378"/>
        <dbReference type="ChEBI" id="CHEBI:28938"/>
        <dbReference type="ChEBI" id="CHEBI:30616"/>
        <dbReference type="ChEBI" id="CHEBI:33019"/>
        <dbReference type="ChEBI" id="CHEBI:57540"/>
        <dbReference type="ChEBI" id="CHEBI:58437"/>
        <dbReference type="ChEBI" id="CHEBI:456215"/>
        <dbReference type="EC" id="6.3.1.5"/>
    </reaction>
</comment>
<comment type="pathway">
    <text evidence="1">Cofactor biosynthesis; NAD(+) biosynthesis; NAD(+) from deamido-NAD(+) (ammonia route): step 1/1.</text>
</comment>
<comment type="subunit">
    <text evidence="1">Homodimer.</text>
</comment>
<comment type="similarity">
    <text evidence="1">Belongs to the NAD synthetase family.</text>
</comment>
<feature type="chain" id="PRO_1000077543" description="NH(3)-dependent NAD(+) synthetase">
    <location>
        <begin position="1"/>
        <end position="246"/>
    </location>
</feature>
<feature type="binding site" evidence="1">
    <location>
        <begin position="29"/>
        <end position="36"/>
    </location>
    <ligand>
        <name>ATP</name>
        <dbReference type="ChEBI" id="CHEBI:30616"/>
    </ligand>
</feature>
<feature type="binding site" evidence="1">
    <location>
        <position position="35"/>
    </location>
    <ligand>
        <name>Mg(2+)</name>
        <dbReference type="ChEBI" id="CHEBI:18420"/>
    </ligand>
</feature>
<feature type="binding site" evidence="1">
    <location>
        <position position="110"/>
    </location>
    <ligand>
        <name>deamido-NAD(+)</name>
        <dbReference type="ChEBI" id="CHEBI:58437"/>
    </ligand>
</feature>
<feature type="binding site" evidence="1">
    <location>
        <position position="130"/>
    </location>
    <ligand>
        <name>ATP</name>
        <dbReference type="ChEBI" id="CHEBI:30616"/>
    </ligand>
</feature>
<feature type="binding site" evidence="1">
    <location>
        <position position="135"/>
    </location>
    <ligand>
        <name>Mg(2+)</name>
        <dbReference type="ChEBI" id="CHEBI:18420"/>
    </ligand>
</feature>
<feature type="binding site" evidence="1">
    <location>
        <position position="159"/>
    </location>
    <ligand>
        <name>ATP</name>
        <dbReference type="ChEBI" id="CHEBI:30616"/>
    </ligand>
</feature>
<feature type="binding site" evidence="1">
    <location>
        <position position="181"/>
    </location>
    <ligand>
        <name>ATP</name>
        <dbReference type="ChEBI" id="CHEBI:30616"/>
    </ligand>
</feature>
<proteinExistence type="inferred from homology"/>
<evidence type="ECO:0000255" key="1">
    <source>
        <dbReference type="HAMAP-Rule" id="MF_00193"/>
    </source>
</evidence>
<keyword id="KW-0067">ATP-binding</keyword>
<keyword id="KW-0436">Ligase</keyword>
<keyword id="KW-0460">Magnesium</keyword>
<keyword id="KW-0479">Metal-binding</keyword>
<keyword id="KW-0520">NAD</keyword>
<keyword id="KW-0547">Nucleotide-binding</keyword>
<accession>Q5HUY2</accession>
<protein>
    <recommendedName>
        <fullName evidence="1">NH(3)-dependent NAD(+) synthetase</fullName>
        <ecNumber evidence="1">6.3.1.5</ecNumber>
    </recommendedName>
</protein>
<name>NADE_CAMJR</name>
<dbReference type="EC" id="6.3.1.5" evidence="1"/>
<dbReference type="EMBL" id="CP000025">
    <property type="protein sequence ID" value="AAW35238.1"/>
    <property type="molecule type" value="Genomic_DNA"/>
</dbReference>
<dbReference type="RefSeq" id="WP_002857155.1">
    <property type="nucleotide sequence ID" value="NC_003912.7"/>
</dbReference>
<dbReference type="SMR" id="Q5HUY2"/>
<dbReference type="KEGG" id="cjr:CJE0901"/>
<dbReference type="HOGENOM" id="CLU_059327_1_2_7"/>
<dbReference type="UniPathway" id="UPA00253">
    <property type="reaction ID" value="UER00333"/>
</dbReference>
<dbReference type="GO" id="GO:0005737">
    <property type="term" value="C:cytoplasm"/>
    <property type="evidence" value="ECO:0007669"/>
    <property type="project" value="InterPro"/>
</dbReference>
<dbReference type="GO" id="GO:0005524">
    <property type="term" value="F:ATP binding"/>
    <property type="evidence" value="ECO:0007669"/>
    <property type="project" value="UniProtKB-UniRule"/>
</dbReference>
<dbReference type="GO" id="GO:0004359">
    <property type="term" value="F:glutaminase activity"/>
    <property type="evidence" value="ECO:0007669"/>
    <property type="project" value="InterPro"/>
</dbReference>
<dbReference type="GO" id="GO:0046872">
    <property type="term" value="F:metal ion binding"/>
    <property type="evidence" value="ECO:0007669"/>
    <property type="project" value="UniProtKB-KW"/>
</dbReference>
<dbReference type="GO" id="GO:0003952">
    <property type="term" value="F:NAD+ synthase (glutamine-hydrolyzing) activity"/>
    <property type="evidence" value="ECO:0007669"/>
    <property type="project" value="InterPro"/>
</dbReference>
<dbReference type="GO" id="GO:0008795">
    <property type="term" value="F:NAD+ synthase activity"/>
    <property type="evidence" value="ECO:0007669"/>
    <property type="project" value="UniProtKB-UniRule"/>
</dbReference>
<dbReference type="GO" id="GO:0009435">
    <property type="term" value="P:NAD biosynthetic process"/>
    <property type="evidence" value="ECO:0007669"/>
    <property type="project" value="UniProtKB-UniRule"/>
</dbReference>
<dbReference type="CDD" id="cd00553">
    <property type="entry name" value="NAD_synthase"/>
    <property type="match status" value="1"/>
</dbReference>
<dbReference type="FunFam" id="3.40.50.620:FF:000106">
    <property type="entry name" value="Glutamine-dependent NAD(+) synthetase"/>
    <property type="match status" value="1"/>
</dbReference>
<dbReference type="Gene3D" id="3.40.50.620">
    <property type="entry name" value="HUPs"/>
    <property type="match status" value="1"/>
</dbReference>
<dbReference type="HAMAP" id="MF_00193">
    <property type="entry name" value="NadE_ammonia_dep"/>
    <property type="match status" value="1"/>
</dbReference>
<dbReference type="InterPro" id="IPR022310">
    <property type="entry name" value="NAD/GMP_synthase"/>
</dbReference>
<dbReference type="InterPro" id="IPR003694">
    <property type="entry name" value="NAD_synthase"/>
</dbReference>
<dbReference type="InterPro" id="IPR022926">
    <property type="entry name" value="NH(3)-dep_NAD(+)_synth"/>
</dbReference>
<dbReference type="InterPro" id="IPR014729">
    <property type="entry name" value="Rossmann-like_a/b/a_fold"/>
</dbReference>
<dbReference type="NCBIfam" id="TIGR00552">
    <property type="entry name" value="nadE"/>
    <property type="match status" value="1"/>
</dbReference>
<dbReference type="NCBIfam" id="NF010587">
    <property type="entry name" value="PRK13980.1"/>
    <property type="match status" value="1"/>
</dbReference>
<dbReference type="PANTHER" id="PTHR23090:SF9">
    <property type="entry name" value="GLUTAMINE-DEPENDENT NAD(+) SYNTHETASE"/>
    <property type="match status" value="1"/>
</dbReference>
<dbReference type="PANTHER" id="PTHR23090">
    <property type="entry name" value="NH 3 /GLUTAMINE-DEPENDENT NAD + SYNTHETASE"/>
    <property type="match status" value="1"/>
</dbReference>
<dbReference type="Pfam" id="PF02540">
    <property type="entry name" value="NAD_synthase"/>
    <property type="match status" value="1"/>
</dbReference>
<dbReference type="SUPFAM" id="SSF52402">
    <property type="entry name" value="Adenine nucleotide alpha hydrolases-like"/>
    <property type="match status" value="1"/>
</dbReference>
<sequence length="246" mass="27433">MDWQKITEKMCDFIQEKVKNSQSQGVVLGLSGGIDSALVATLCKRALKENVFALLMPTQISNKANLEDALRLCADLNLEYKIIEIQSILDAFIKQSENTTLVSLGNFAARIRMSLLYDYSALKNSLVIGTSNKSELLLGYGTIYGDLACAFNPIGSLYKSEIYALAKYLNLHENFIKKAPSADLWENQSDEADLGFSYAKIDEGLKALETNDEKLLRTLDPSLIAMLKNRMQKNAFKGKMPEILEI</sequence>